<comment type="function">
    <text>Involved in oxygen transport from gills to the various peripheral tissues.</text>
</comment>
<comment type="subunit">
    <text>Heterotetramer of two alpha chains and two beta chains.</text>
</comment>
<comment type="tissue specificity">
    <text>Red blood cells.</text>
</comment>
<comment type="similarity">
    <text evidence="1">Belongs to the globin family.</text>
</comment>
<reference key="1">
    <citation type="journal article" date="1996" name="Nat. Struct. Biol.">
        <title>Structural basis for the root effect in haemoglobin.</title>
        <authorList>
            <person name="Mylvaganam S.E."/>
            <person name="Bonaventura C."/>
            <person name="Bonaventura J."/>
            <person name="Getzoff E.D."/>
        </authorList>
    </citation>
    <scope>PROTEIN SEQUENCE</scope>
    <scope>ACETYLATION AT SER-1</scope>
    <scope>X-RAY CRYSTALLOGRAPHY (1.95 ANGSTROMS)</scope>
</reference>
<feature type="chain" id="PRO_0000052664" description="Hemoglobin subunit alpha">
    <location>
        <begin position="1"/>
        <end position="143"/>
    </location>
</feature>
<feature type="domain" description="Globin" evidence="1">
    <location>
        <begin position="1"/>
        <end position="143"/>
    </location>
</feature>
<feature type="binding site" evidence="1">
    <location>
        <position position="60"/>
    </location>
    <ligand>
        <name>O2</name>
        <dbReference type="ChEBI" id="CHEBI:15379"/>
    </ligand>
</feature>
<feature type="binding site" description="proximal binding residue" evidence="1">
    <location>
        <position position="89"/>
    </location>
    <ligand>
        <name>heme b</name>
        <dbReference type="ChEBI" id="CHEBI:60344"/>
    </ligand>
    <ligandPart>
        <name>Fe</name>
        <dbReference type="ChEBI" id="CHEBI:18248"/>
    </ligandPart>
</feature>
<feature type="modified residue" description="N-acetylserine" evidence="2">
    <location>
        <position position="1"/>
    </location>
</feature>
<feature type="helix" evidence="3">
    <location>
        <begin position="4"/>
        <end position="17"/>
    </location>
</feature>
<feature type="helix" evidence="3">
    <location>
        <begin position="21"/>
        <end position="35"/>
    </location>
</feature>
<feature type="helix" evidence="3">
    <location>
        <begin position="37"/>
        <end position="43"/>
    </location>
</feature>
<feature type="helix" evidence="3">
    <location>
        <begin position="55"/>
        <end position="73"/>
    </location>
</feature>
<feature type="turn" evidence="3">
    <location>
        <begin position="74"/>
        <end position="76"/>
    </location>
</feature>
<feature type="helix" evidence="3">
    <location>
        <begin position="78"/>
        <end position="90"/>
    </location>
</feature>
<feature type="helix" evidence="3">
    <location>
        <begin position="98"/>
        <end position="114"/>
    </location>
</feature>
<feature type="turn" evidence="3">
    <location>
        <begin position="116"/>
        <end position="118"/>
    </location>
</feature>
<feature type="helix" evidence="3">
    <location>
        <begin position="121"/>
        <end position="138"/>
    </location>
</feature>
<feature type="turn" evidence="3">
    <location>
        <begin position="139"/>
        <end position="141"/>
    </location>
</feature>
<name>HBA_LEIXA</name>
<gene>
    <name type="primary">hba</name>
</gene>
<sequence>SLSATDKARVKALWDKIEGKSAELGAEALGRMLVSFPQTKIYFSEWGQDLGPQTPQVRNHGAVIMAAVGKAVKSIDNLVGGLSQLSELHAFKLRVDPANFKILAHNIILVISMYFPGDFTPEVHLSVDKFLACLALALSEKYR</sequence>
<protein>
    <recommendedName>
        <fullName>Hemoglobin subunit alpha</fullName>
    </recommendedName>
    <alternativeName>
        <fullName>Alpha-globin</fullName>
    </alternativeName>
    <alternativeName>
        <fullName>Hemoglobin alpha chain</fullName>
    </alternativeName>
</protein>
<dbReference type="PDB" id="1SPG">
    <property type="method" value="X-ray"/>
    <property type="resolution" value="1.95 A"/>
    <property type="chains" value="A=1-143"/>
</dbReference>
<dbReference type="PDBsum" id="1SPG"/>
<dbReference type="SMR" id="P56250"/>
<dbReference type="MINT" id="P56250"/>
<dbReference type="iPTMnet" id="P56250"/>
<dbReference type="EvolutionaryTrace" id="P56250"/>
<dbReference type="GO" id="GO:0072562">
    <property type="term" value="C:blood microparticle"/>
    <property type="evidence" value="ECO:0007669"/>
    <property type="project" value="TreeGrafter"/>
</dbReference>
<dbReference type="GO" id="GO:0031838">
    <property type="term" value="C:haptoglobin-hemoglobin complex"/>
    <property type="evidence" value="ECO:0007669"/>
    <property type="project" value="TreeGrafter"/>
</dbReference>
<dbReference type="GO" id="GO:0005833">
    <property type="term" value="C:hemoglobin complex"/>
    <property type="evidence" value="ECO:0007669"/>
    <property type="project" value="InterPro"/>
</dbReference>
<dbReference type="GO" id="GO:0031720">
    <property type="term" value="F:haptoglobin binding"/>
    <property type="evidence" value="ECO:0007669"/>
    <property type="project" value="TreeGrafter"/>
</dbReference>
<dbReference type="GO" id="GO:0020037">
    <property type="term" value="F:heme binding"/>
    <property type="evidence" value="ECO:0007669"/>
    <property type="project" value="InterPro"/>
</dbReference>
<dbReference type="GO" id="GO:0046872">
    <property type="term" value="F:metal ion binding"/>
    <property type="evidence" value="ECO:0007669"/>
    <property type="project" value="UniProtKB-KW"/>
</dbReference>
<dbReference type="GO" id="GO:0043177">
    <property type="term" value="F:organic acid binding"/>
    <property type="evidence" value="ECO:0007669"/>
    <property type="project" value="TreeGrafter"/>
</dbReference>
<dbReference type="GO" id="GO:0019825">
    <property type="term" value="F:oxygen binding"/>
    <property type="evidence" value="ECO:0007669"/>
    <property type="project" value="InterPro"/>
</dbReference>
<dbReference type="GO" id="GO:0005344">
    <property type="term" value="F:oxygen carrier activity"/>
    <property type="evidence" value="ECO:0007669"/>
    <property type="project" value="UniProtKB-KW"/>
</dbReference>
<dbReference type="GO" id="GO:0004601">
    <property type="term" value="F:peroxidase activity"/>
    <property type="evidence" value="ECO:0007669"/>
    <property type="project" value="TreeGrafter"/>
</dbReference>
<dbReference type="GO" id="GO:0042744">
    <property type="term" value="P:hydrogen peroxide catabolic process"/>
    <property type="evidence" value="ECO:0007669"/>
    <property type="project" value="TreeGrafter"/>
</dbReference>
<dbReference type="CDD" id="cd08927">
    <property type="entry name" value="Hb-alpha-like"/>
    <property type="match status" value="1"/>
</dbReference>
<dbReference type="FunFam" id="1.10.490.10:FF:000002">
    <property type="entry name" value="Hemoglobin subunit alpha"/>
    <property type="match status" value="1"/>
</dbReference>
<dbReference type="Gene3D" id="1.10.490.10">
    <property type="entry name" value="Globins"/>
    <property type="match status" value="1"/>
</dbReference>
<dbReference type="InterPro" id="IPR000971">
    <property type="entry name" value="Globin"/>
</dbReference>
<dbReference type="InterPro" id="IPR009050">
    <property type="entry name" value="Globin-like_sf"/>
</dbReference>
<dbReference type="InterPro" id="IPR012292">
    <property type="entry name" value="Globin/Proto"/>
</dbReference>
<dbReference type="InterPro" id="IPR002338">
    <property type="entry name" value="Hemoglobin_a-typ"/>
</dbReference>
<dbReference type="InterPro" id="IPR050056">
    <property type="entry name" value="Hemoglobin_oxygen_transport"/>
</dbReference>
<dbReference type="PANTHER" id="PTHR11442:SF93">
    <property type="entry name" value="ALPHA GLOBIN-LIKE-RELATED"/>
    <property type="match status" value="1"/>
</dbReference>
<dbReference type="PANTHER" id="PTHR11442">
    <property type="entry name" value="HEMOGLOBIN FAMILY MEMBER"/>
    <property type="match status" value="1"/>
</dbReference>
<dbReference type="Pfam" id="PF00042">
    <property type="entry name" value="Globin"/>
    <property type="match status" value="1"/>
</dbReference>
<dbReference type="PRINTS" id="PR00612">
    <property type="entry name" value="ALPHAHAEM"/>
</dbReference>
<dbReference type="SUPFAM" id="SSF46458">
    <property type="entry name" value="Globin-like"/>
    <property type="match status" value="1"/>
</dbReference>
<dbReference type="PROSITE" id="PS01033">
    <property type="entry name" value="GLOBIN"/>
    <property type="match status" value="1"/>
</dbReference>
<evidence type="ECO:0000255" key="1">
    <source>
        <dbReference type="PROSITE-ProRule" id="PRU00238"/>
    </source>
</evidence>
<evidence type="ECO:0000269" key="2">
    <source>
    </source>
</evidence>
<evidence type="ECO:0007829" key="3">
    <source>
        <dbReference type="PDB" id="1SPG"/>
    </source>
</evidence>
<keyword id="KW-0002">3D-structure</keyword>
<keyword id="KW-0007">Acetylation</keyword>
<keyword id="KW-0903">Direct protein sequencing</keyword>
<keyword id="KW-0349">Heme</keyword>
<keyword id="KW-0408">Iron</keyword>
<keyword id="KW-0479">Metal-binding</keyword>
<keyword id="KW-0561">Oxygen transport</keyword>
<keyword id="KW-0813">Transport</keyword>
<accession>P56250</accession>
<proteinExistence type="evidence at protein level"/>
<organism>
    <name type="scientific">Leiostomus xanthurus</name>
    <name type="common">Spot</name>
    <dbReference type="NCBI Taxonomy" id="59837"/>
    <lineage>
        <taxon>Eukaryota</taxon>
        <taxon>Metazoa</taxon>
        <taxon>Chordata</taxon>
        <taxon>Craniata</taxon>
        <taxon>Vertebrata</taxon>
        <taxon>Euteleostomi</taxon>
        <taxon>Actinopterygii</taxon>
        <taxon>Neopterygii</taxon>
        <taxon>Teleostei</taxon>
        <taxon>Neoteleostei</taxon>
        <taxon>Acanthomorphata</taxon>
        <taxon>Eupercaria</taxon>
        <taxon>Sciaenidae</taxon>
        <taxon>Leiostomus</taxon>
    </lineage>
</organism>